<keyword id="KW-0249">Electron transport</keyword>
<keyword id="KW-0349">Heme</keyword>
<keyword id="KW-0408">Iron</keyword>
<keyword id="KW-0472">Membrane</keyword>
<keyword id="KW-0479">Metal-binding</keyword>
<keyword id="KW-0496">Mitochondrion</keyword>
<keyword id="KW-0999">Mitochondrion inner membrane</keyword>
<keyword id="KW-0679">Respiratory chain</keyword>
<keyword id="KW-0812">Transmembrane</keyword>
<keyword id="KW-1133">Transmembrane helix</keyword>
<keyword id="KW-0813">Transport</keyword>
<keyword id="KW-0830">Ubiquinone</keyword>
<reference key="1">
    <citation type="journal article" date="2000" name="Mol. Phylogenet. Evol.">
        <title>Phylogenetic relationships of elapid snakes based on cytochrome b mtDNA sequences.</title>
        <authorList>
            <person name="Slowinski J.B."/>
            <person name="Keogh J.S."/>
        </authorList>
    </citation>
    <scope>NUCLEOTIDE SEQUENCE [GENOMIC DNA]</scope>
</reference>
<proteinExistence type="inferred from homology"/>
<evidence type="ECO:0000250" key="1"/>
<evidence type="ECO:0000250" key="2">
    <source>
        <dbReference type="UniProtKB" id="P00157"/>
    </source>
</evidence>
<evidence type="ECO:0000255" key="3">
    <source>
        <dbReference type="PROSITE-ProRule" id="PRU00967"/>
    </source>
</evidence>
<evidence type="ECO:0000255" key="4">
    <source>
        <dbReference type="PROSITE-ProRule" id="PRU00968"/>
    </source>
</evidence>
<sequence>MSNQHTLLTSNLLPVGSNISTWWNFGSMLLTCLIMQILTGFFLAIHYTANINLAFSSVIHITRDVPYGWIMQNLHAIGASMFFICIYIHIARGLYYGLYLNKEVWLSGTTLLITLMATAFFGYVLPWGQMSFWAATVITNLLTAIPHLGTVLTTWLWGGFSINDPTLTRFFALHFILPFAIISLSSIHIILLHNEGSNNPLGTNSDIDKIPFHPYHSYKDMLMITIMVTLLFIILSFLPNLLNDPENFSKANPLITPQHIKPEWYFLFAYGILRSIPNKLGGTMALTMSIMILMTTPFTHTSHTRSMIFRPLSQTMFWTLIVTFIMITWTATKPVEPPFITISQTTTVFYFSFFIMTPLLGWTENKIMMMKN</sequence>
<geneLocation type="mitochondrion"/>
<gene>
    <name type="primary">MT-CYB</name>
    <name type="synonym">COB</name>
    <name type="synonym">CYTB</name>
    <name type="synonym">MTCYB</name>
</gene>
<dbReference type="EMBL" id="AF217828">
    <property type="protein sequence ID" value="AAF37247.1"/>
    <property type="molecule type" value="Genomic_DNA"/>
</dbReference>
<dbReference type="SMR" id="Q9MLK0"/>
<dbReference type="GO" id="GO:0005743">
    <property type="term" value="C:mitochondrial inner membrane"/>
    <property type="evidence" value="ECO:0007669"/>
    <property type="project" value="UniProtKB-SubCell"/>
</dbReference>
<dbReference type="GO" id="GO:0045275">
    <property type="term" value="C:respiratory chain complex III"/>
    <property type="evidence" value="ECO:0007669"/>
    <property type="project" value="InterPro"/>
</dbReference>
<dbReference type="GO" id="GO:0046872">
    <property type="term" value="F:metal ion binding"/>
    <property type="evidence" value="ECO:0007669"/>
    <property type="project" value="UniProtKB-KW"/>
</dbReference>
<dbReference type="GO" id="GO:0008121">
    <property type="term" value="F:ubiquinol-cytochrome-c reductase activity"/>
    <property type="evidence" value="ECO:0007669"/>
    <property type="project" value="InterPro"/>
</dbReference>
<dbReference type="GO" id="GO:0006122">
    <property type="term" value="P:mitochondrial electron transport, ubiquinol to cytochrome c"/>
    <property type="evidence" value="ECO:0007669"/>
    <property type="project" value="TreeGrafter"/>
</dbReference>
<dbReference type="CDD" id="cd00290">
    <property type="entry name" value="cytochrome_b_C"/>
    <property type="match status" value="1"/>
</dbReference>
<dbReference type="CDD" id="cd00284">
    <property type="entry name" value="Cytochrome_b_N"/>
    <property type="match status" value="1"/>
</dbReference>
<dbReference type="Gene3D" id="1.20.810.10">
    <property type="entry name" value="Cytochrome Bc1 Complex, Chain C"/>
    <property type="match status" value="1"/>
</dbReference>
<dbReference type="InterPro" id="IPR005798">
    <property type="entry name" value="Cyt_b/b6_C"/>
</dbReference>
<dbReference type="InterPro" id="IPR036150">
    <property type="entry name" value="Cyt_b/b6_C_sf"/>
</dbReference>
<dbReference type="InterPro" id="IPR005797">
    <property type="entry name" value="Cyt_b/b6_N"/>
</dbReference>
<dbReference type="InterPro" id="IPR027387">
    <property type="entry name" value="Cytb/b6-like_sf"/>
</dbReference>
<dbReference type="InterPro" id="IPR030689">
    <property type="entry name" value="Cytochrome_b"/>
</dbReference>
<dbReference type="InterPro" id="IPR048260">
    <property type="entry name" value="Cytochrome_b_C_euk/bac"/>
</dbReference>
<dbReference type="InterPro" id="IPR048259">
    <property type="entry name" value="Cytochrome_b_N_euk/bac"/>
</dbReference>
<dbReference type="InterPro" id="IPR016174">
    <property type="entry name" value="Di-haem_cyt_TM"/>
</dbReference>
<dbReference type="PANTHER" id="PTHR19271">
    <property type="entry name" value="CYTOCHROME B"/>
    <property type="match status" value="1"/>
</dbReference>
<dbReference type="PANTHER" id="PTHR19271:SF16">
    <property type="entry name" value="CYTOCHROME B"/>
    <property type="match status" value="1"/>
</dbReference>
<dbReference type="Pfam" id="PF00032">
    <property type="entry name" value="Cytochrom_B_C"/>
    <property type="match status" value="1"/>
</dbReference>
<dbReference type="Pfam" id="PF00033">
    <property type="entry name" value="Cytochrome_B"/>
    <property type="match status" value="1"/>
</dbReference>
<dbReference type="PIRSF" id="PIRSF038885">
    <property type="entry name" value="COB"/>
    <property type="match status" value="1"/>
</dbReference>
<dbReference type="SUPFAM" id="SSF81648">
    <property type="entry name" value="a domain/subunit of cytochrome bc1 complex (Ubiquinol-cytochrome c reductase)"/>
    <property type="match status" value="1"/>
</dbReference>
<dbReference type="SUPFAM" id="SSF81342">
    <property type="entry name" value="Transmembrane di-heme cytochromes"/>
    <property type="match status" value="1"/>
</dbReference>
<dbReference type="PROSITE" id="PS51003">
    <property type="entry name" value="CYTB_CTER"/>
    <property type="match status" value="1"/>
</dbReference>
<dbReference type="PROSITE" id="PS51002">
    <property type="entry name" value="CYTB_NTER"/>
    <property type="match status" value="1"/>
</dbReference>
<organism>
    <name type="scientific">Aspidelaps scutatus</name>
    <name type="common">Shield-nose snake</name>
    <dbReference type="NCBI Taxonomy" id="8607"/>
    <lineage>
        <taxon>Eukaryota</taxon>
        <taxon>Metazoa</taxon>
        <taxon>Chordata</taxon>
        <taxon>Craniata</taxon>
        <taxon>Vertebrata</taxon>
        <taxon>Euteleostomi</taxon>
        <taxon>Lepidosauria</taxon>
        <taxon>Squamata</taxon>
        <taxon>Bifurcata</taxon>
        <taxon>Unidentata</taxon>
        <taxon>Episquamata</taxon>
        <taxon>Toxicofera</taxon>
        <taxon>Serpentes</taxon>
        <taxon>Colubroidea</taxon>
        <taxon>Elapidae</taxon>
        <taxon>Elapidae incertae sedis</taxon>
        <taxon>Aspidelaps</taxon>
    </lineage>
</organism>
<feature type="chain" id="PRO_0000060647" description="Cytochrome b">
    <location>
        <begin position="1"/>
        <end position="372"/>
    </location>
</feature>
<feature type="transmembrane region" description="Helical" evidence="2">
    <location>
        <begin position="25"/>
        <end position="45"/>
    </location>
</feature>
<feature type="transmembrane region" description="Helical" evidence="2">
    <location>
        <begin position="69"/>
        <end position="90"/>
    </location>
</feature>
<feature type="transmembrane region" description="Helical" evidence="2">
    <location>
        <begin position="105"/>
        <end position="125"/>
    </location>
</feature>
<feature type="transmembrane region" description="Helical" evidence="2">
    <location>
        <begin position="170"/>
        <end position="190"/>
    </location>
</feature>
<feature type="transmembrane region" description="Helical" evidence="2">
    <location>
        <begin position="218"/>
        <end position="238"/>
    </location>
</feature>
<feature type="transmembrane region" description="Helical" evidence="2">
    <location>
        <begin position="280"/>
        <end position="300"/>
    </location>
</feature>
<feature type="transmembrane region" description="Helical" evidence="2">
    <location>
        <begin position="312"/>
        <end position="332"/>
    </location>
</feature>
<feature type="transmembrane region" description="Helical" evidence="2">
    <location>
        <begin position="339"/>
        <end position="358"/>
    </location>
</feature>
<feature type="binding site" description="axial binding residue" evidence="2">
    <location>
        <position position="75"/>
    </location>
    <ligand>
        <name>heme b</name>
        <dbReference type="ChEBI" id="CHEBI:60344"/>
        <label>b562</label>
    </ligand>
    <ligandPart>
        <name>Fe</name>
        <dbReference type="ChEBI" id="CHEBI:18248"/>
    </ligandPart>
</feature>
<feature type="binding site" description="axial binding residue" evidence="2">
    <location>
        <position position="89"/>
    </location>
    <ligand>
        <name>heme b</name>
        <dbReference type="ChEBI" id="CHEBI:60344"/>
        <label>b566</label>
    </ligand>
    <ligandPart>
        <name>Fe</name>
        <dbReference type="ChEBI" id="CHEBI:18248"/>
    </ligandPart>
</feature>
<feature type="binding site" description="axial binding residue" evidence="2">
    <location>
        <position position="174"/>
    </location>
    <ligand>
        <name>heme b</name>
        <dbReference type="ChEBI" id="CHEBI:60344"/>
        <label>b562</label>
    </ligand>
    <ligandPart>
        <name>Fe</name>
        <dbReference type="ChEBI" id="CHEBI:18248"/>
    </ligandPart>
</feature>
<feature type="binding site" description="axial binding residue" evidence="2">
    <location>
        <position position="188"/>
    </location>
    <ligand>
        <name>heme b</name>
        <dbReference type="ChEBI" id="CHEBI:60344"/>
        <label>b566</label>
    </ligand>
    <ligandPart>
        <name>Fe</name>
        <dbReference type="ChEBI" id="CHEBI:18248"/>
    </ligandPart>
</feature>
<feature type="binding site" evidence="2">
    <location>
        <position position="193"/>
    </location>
    <ligand>
        <name>a ubiquinone</name>
        <dbReference type="ChEBI" id="CHEBI:16389"/>
    </ligand>
</feature>
<comment type="function">
    <text evidence="2">Component of the ubiquinol-cytochrome c reductase complex (complex III or cytochrome b-c1 complex) that is part of the mitochondrial respiratory chain. The b-c1 complex mediates electron transfer from ubiquinol to cytochrome c. Contributes to the generation of a proton gradient across the mitochondrial membrane that is then used for ATP synthesis.</text>
</comment>
<comment type="cofactor">
    <cofactor evidence="2">
        <name>heme b</name>
        <dbReference type="ChEBI" id="CHEBI:60344"/>
    </cofactor>
    <text evidence="2">Binds 2 heme b groups non-covalently.</text>
</comment>
<comment type="subunit">
    <text evidence="2">The cytochrome bc1 complex contains 3 respiratory subunits (MT-CYB, CYC1 and UQCRFS1), 2 core proteins (UQCRC1 and UQCRC2) and probably 6 low-molecular weight proteins.</text>
</comment>
<comment type="subcellular location">
    <subcellularLocation>
        <location evidence="2">Mitochondrion inner membrane</location>
        <topology evidence="2">Multi-pass membrane protein</topology>
    </subcellularLocation>
</comment>
<comment type="miscellaneous">
    <text evidence="1">Heme 1 (or BL or b562) is low-potential and absorbs at about 562 nm, and heme 2 (or BH or b566) is high-potential and absorbs at about 566 nm.</text>
</comment>
<comment type="similarity">
    <text evidence="3 4">Belongs to the cytochrome b family.</text>
</comment>
<comment type="caution">
    <text evidence="2">The full-length protein contains only eight transmembrane helices, not nine as predicted by bioinformatics tools.</text>
</comment>
<name>CYB_ASPSC</name>
<protein>
    <recommendedName>
        <fullName>Cytochrome b</fullName>
    </recommendedName>
    <alternativeName>
        <fullName>Complex III subunit 3</fullName>
    </alternativeName>
    <alternativeName>
        <fullName>Complex III subunit III</fullName>
    </alternativeName>
    <alternativeName>
        <fullName>Cytochrome b-c1 complex subunit 3</fullName>
    </alternativeName>
    <alternativeName>
        <fullName>Ubiquinol-cytochrome-c reductase complex cytochrome b subunit</fullName>
    </alternativeName>
</protein>
<accession>Q9MLK0</accession>